<accession>Q47C66</accession>
<organism>
    <name type="scientific">Dechloromonas aromatica (strain RCB)</name>
    <dbReference type="NCBI Taxonomy" id="159087"/>
    <lineage>
        <taxon>Bacteria</taxon>
        <taxon>Pseudomonadati</taxon>
        <taxon>Pseudomonadota</taxon>
        <taxon>Betaproteobacteria</taxon>
        <taxon>Rhodocyclales</taxon>
        <taxon>Azonexaceae</taxon>
        <taxon>Dechloromonas</taxon>
    </lineage>
</organism>
<sequence length="225" mass="23929">MSESILIARGVSKVFRGGGLEVPVLSGIDLAVQPGETVAIIGASGSGKSTLLHLLGGLDTPSAGSVTLMGRDFSALGEVDRGDWRNRHLGFVYQFHHLLAEFSALENVAMPLLIRRTERHAALAKAAEILTAVGLGHRLEHRPGELSGGERQRAAIARALVSDPSCLLADEPTGNLDSHTASVVFGLLIERVRQQQVSLIVVTHDQQLAAKADRVLNLNDGILCE</sequence>
<protein>
    <recommendedName>
        <fullName evidence="1">Lipoprotein-releasing system ATP-binding protein LolD</fullName>
        <ecNumber evidence="1">7.6.2.-</ecNumber>
    </recommendedName>
</protein>
<reference key="1">
    <citation type="journal article" date="2009" name="BMC Genomics">
        <title>Metabolic analysis of the soil microbe Dechloromonas aromatica str. RCB: indications of a surprisingly complex life-style and cryptic anaerobic pathways for aromatic degradation.</title>
        <authorList>
            <person name="Salinero K.K."/>
            <person name="Keller K."/>
            <person name="Feil W.S."/>
            <person name="Feil H."/>
            <person name="Trong S."/>
            <person name="Di Bartolo G."/>
            <person name="Lapidus A."/>
        </authorList>
    </citation>
    <scope>NUCLEOTIDE SEQUENCE [LARGE SCALE GENOMIC DNA]</scope>
    <source>
        <strain>RCB</strain>
    </source>
</reference>
<gene>
    <name evidence="1" type="primary">lolD</name>
    <name type="ordered locus">Daro_2835</name>
</gene>
<feature type="chain" id="PRO_0000272074" description="Lipoprotein-releasing system ATP-binding protein LolD">
    <location>
        <begin position="1"/>
        <end position="225"/>
    </location>
</feature>
<feature type="domain" description="ABC transporter" evidence="1">
    <location>
        <begin position="6"/>
        <end position="225"/>
    </location>
</feature>
<feature type="binding site" evidence="1">
    <location>
        <begin position="42"/>
        <end position="49"/>
    </location>
    <ligand>
        <name>ATP</name>
        <dbReference type="ChEBI" id="CHEBI:30616"/>
    </ligand>
</feature>
<name>LOLD_DECAR</name>
<evidence type="ECO:0000255" key="1">
    <source>
        <dbReference type="HAMAP-Rule" id="MF_01708"/>
    </source>
</evidence>
<proteinExistence type="inferred from homology"/>
<dbReference type="EC" id="7.6.2.-" evidence="1"/>
<dbReference type="EMBL" id="CP000089">
    <property type="protein sequence ID" value="AAZ47565.1"/>
    <property type="molecule type" value="Genomic_DNA"/>
</dbReference>
<dbReference type="SMR" id="Q47C66"/>
<dbReference type="STRING" id="159087.Daro_2835"/>
<dbReference type="KEGG" id="dar:Daro_2835"/>
<dbReference type="eggNOG" id="COG1136">
    <property type="taxonomic scope" value="Bacteria"/>
</dbReference>
<dbReference type="HOGENOM" id="CLU_000604_1_22_4"/>
<dbReference type="OrthoDB" id="8524638at2"/>
<dbReference type="GO" id="GO:0005886">
    <property type="term" value="C:plasma membrane"/>
    <property type="evidence" value="ECO:0007669"/>
    <property type="project" value="UniProtKB-SubCell"/>
</dbReference>
<dbReference type="GO" id="GO:0005524">
    <property type="term" value="F:ATP binding"/>
    <property type="evidence" value="ECO:0007669"/>
    <property type="project" value="UniProtKB-KW"/>
</dbReference>
<dbReference type="GO" id="GO:0016887">
    <property type="term" value="F:ATP hydrolysis activity"/>
    <property type="evidence" value="ECO:0007669"/>
    <property type="project" value="InterPro"/>
</dbReference>
<dbReference type="GO" id="GO:0022857">
    <property type="term" value="F:transmembrane transporter activity"/>
    <property type="evidence" value="ECO:0007669"/>
    <property type="project" value="TreeGrafter"/>
</dbReference>
<dbReference type="GO" id="GO:0044874">
    <property type="term" value="P:lipoprotein localization to outer membrane"/>
    <property type="evidence" value="ECO:0007669"/>
    <property type="project" value="TreeGrafter"/>
</dbReference>
<dbReference type="GO" id="GO:0089705">
    <property type="term" value="P:protein localization to outer membrane"/>
    <property type="evidence" value="ECO:0007669"/>
    <property type="project" value="TreeGrafter"/>
</dbReference>
<dbReference type="CDD" id="cd03255">
    <property type="entry name" value="ABC_MJ0796_LolCDE_FtsE"/>
    <property type="match status" value="1"/>
</dbReference>
<dbReference type="FunFam" id="3.40.50.300:FF:000230">
    <property type="entry name" value="Lipoprotein-releasing system ATP-binding protein LolD"/>
    <property type="match status" value="1"/>
</dbReference>
<dbReference type="Gene3D" id="3.40.50.300">
    <property type="entry name" value="P-loop containing nucleotide triphosphate hydrolases"/>
    <property type="match status" value="1"/>
</dbReference>
<dbReference type="InterPro" id="IPR003593">
    <property type="entry name" value="AAA+_ATPase"/>
</dbReference>
<dbReference type="InterPro" id="IPR003439">
    <property type="entry name" value="ABC_transporter-like_ATP-bd"/>
</dbReference>
<dbReference type="InterPro" id="IPR017871">
    <property type="entry name" value="ABC_transporter-like_CS"/>
</dbReference>
<dbReference type="InterPro" id="IPR015854">
    <property type="entry name" value="ABC_transpr_LolD-like"/>
</dbReference>
<dbReference type="InterPro" id="IPR011924">
    <property type="entry name" value="LolD_lipo_ATP-bd"/>
</dbReference>
<dbReference type="InterPro" id="IPR017911">
    <property type="entry name" value="MacB-like_ATP-bd"/>
</dbReference>
<dbReference type="InterPro" id="IPR027417">
    <property type="entry name" value="P-loop_NTPase"/>
</dbReference>
<dbReference type="NCBIfam" id="TIGR02211">
    <property type="entry name" value="LolD_lipo_ex"/>
    <property type="match status" value="1"/>
</dbReference>
<dbReference type="PANTHER" id="PTHR24220">
    <property type="entry name" value="IMPORT ATP-BINDING PROTEIN"/>
    <property type="match status" value="1"/>
</dbReference>
<dbReference type="PANTHER" id="PTHR24220:SF689">
    <property type="entry name" value="LIPOPROTEIN-RELEASING SYSTEM ATP-BINDING PROTEIN LOLD"/>
    <property type="match status" value="1"/>
</dbReference>
<dbReference type="Pfam" id="PF00005">
    <property type="entry name" value="ABC_tran"/>
    <property type="match status" value="1"/>
</dbReference>
<dbReference type="SMART" id="SM00382">
    <property type="entry name" value="AAA"/>
    <property type="match status" value="1"/>
</dbReference>
<dbReference type="SUPFAM" id="SSF52540">
    <property type="entry name" value="P-loop containing nucleoside triphosphate hydrolases"/>
    <property type="match status" value="1"/>
</dbReference>
<dbReference type="PROSITE" id="PS00211">
    <property type="entry name" value="ABC_TRANSPORTER_1"/>
    <property type="match status" value="1"/>
</dbReference>
<dbReference type="PROSITE" id="PS50893">
    <property type="entry name" value="ABC_TRANSPORTER_2"/>
    <property type="match status" value="1"/>
</dbReference>
<dbReference type="PROSITE" id="PS51244">
    <property type="entry name" value="LOLD"/>
    <property type="match status" value="1"/>
</dbReference>
<comment type="function">
    <text evidence="1">Part of the ABC transporter complex LolCDE involved in the translocation of mature outer membrane-directed lipoproteins, from the inner membrane to the periplasmic chaperone, LolA. Responsible for the formation of the LolA-lipoprotein complex in an ATP-dependent manner.</text>
</comment>
<comment type="subunit">
    <text evidence="1">The complex is composed of two ATP-binding proteins (LolD) and two transmembrane proteins (LolC and LolE).</text>
</comment>
<comment type="subcellular location">
    <subcellularLocation>
        <location evidence="1">Cell inner membrane</location>
        <topology evidence="1">Peripheral membrane protein</topology>
    </subcellularLocation>
</comment>
<comment type="similarity">
    <text evidence="1">Belongs to the ABC transporter superfamily. Lipoprotein translocase (TC 3.A.1.125) family.</text>
</comment>
<keyword id="KW-0067">ATP-binding</keyword>
<keyword id="KW-0997">Cell inner membrane</keyword>
<keyword id="KW-1003">Cell membrane</keyword>
<keyword id="KW-0472">Membrane</keyword>
<keyword id="KW-0547">Nucleotide-binding</keyword>
<keyword id="KW-1278">Translocase</keyword>
<keyword id="KW-0813">Transport</keyword>